<dbReference type="EC" id="3.4.21.-"/>
<dbReference type="EMBL" id="ABSU01000015">
    <property type="protein sequence ID" value="EFE32516.1"/>
    <property type="molecule type" value="Genomic_DNA"/>
</dbReference>
<dbReference type="RefSeq" id="XP_003013156.1">
    <property type="nucleotide sequence ID" value="XM_003013110.1"/>
</dbReference>
<dbReference type="SMR" id="D4AWY5"/>
<dbReference type="GlyCosmos" id="D4AWY5">
    <property type="glycosylation" value="2 sites, No reported glycans"/>
</dbReference>
<dbReference type="GeneID" id="9523236"/>
<dbReference type="KEGG" id="abe:ARB_00701"/>
<dbReference type="eggNOG" id="KOG1153">
    <property type="taxonomic scope" value="Eukaryota"/>
</dbReference>
<dbReference type="HOGENOM" id="CLU_011263_1_3_1"/>
<dbReference type="OMA" id="CGIDYVT"/>
<dbReference type="OrthoDB" id="206201at2759"/>
<dbReference type="Proteomes" id="UP000008866">
    <property type="component" value="Unassembled WGS sequence"/>
</dbReference>
<dbReference type="GO" id="GO:0005576">
    <property type="term" value="C:extracellular region"/>
    <property type="evidence" value="ECO:0007669"/>
    <property type="project" value="UniProtKB-SubCell"/>
</dbReference>
<dbReference type="GO" id="GO:0004252">
    <property type="term" value="F:serine-type endopeptidase activity"/>
    <property type="evidence" value="ECO:0007669"/>
    <property type="project" value="InterPro"/>
</dbReference>
<dbReference type="GO" id="GO:0006508">
    <property type="term" value="P:proteolysis"/>
    <property type="evidence" value="ECO:0007669"/>
    <property type="project" value="UniProtKB-KW"/>
</dbReference>
<dbReference type="CDD" id="cd04077">
    <property type="entry name" value="Peptidases_S8_PCSK9_ProteinaseK_like"/>
    <property type="match status" value="1"/>
</dbReference>
<dbReference type="FunFam" id="3.40.50.200:FF:000014">
    <property type="entry name" value="Proteinase K"/>
    <property type="match status" value="1"/>
</dbReference>
<dbReference type="Gene3D" id="3.30.70.80">
    <property type="entry name" value="Peptidase S8 propeptide/proteinase inhibitor I9"/>
    <property type="match status" value="1"/>
</dbReference>
<dbReference type="Gene3D" id="3.40.50.200">
    <property type="entry name" value="Peptidase S8/S53 domain"/>
    <property type="match status" value="1"/>
</dbReference>
<dbReference type="InterPro" id="IPR034193">
    <property type="entry name" value="PCSK9_ProteinaseK-like"/>
</dbReference>
<dbReference type="InterPro" id="IPR000209">
    <property type="entry name" value="Peptidase_S8/S53_dom"/>
</dbReference>
<dbReference type="InterPro" id="IPR036852">
    <property type="entry name" value="Peptidase_S8/S53_dom_sf"/>
</dbReference>
<dbReference type="InterPro" id="IPR023828">
    <property type="entry name" value="Peptidase_S8_Ser-AS"/>
</dbReference>
<dbReference type="InterPro" id="IPR050131">
    <property type="entry name" value="Peptidase_S8_subtilisin-like"/>
</dbReference>
<dbReference type="InterPro" id="IPR015500">
    <property type="entry name" value="Peptidase_S8_subtilisin-rel"/>
</dbReference>
<dbReference type="InterPro" id="IPR010259">
    <property type="entry name" value="S8pro/Inhibitor_I9"/>
</dbReference>
<dbReference type="InterPro" id="IPR037045">
    <property type="entry name" value="S8pro/Inhibitor_I9_sf"/>
</dbReference>
<dbReference type="PANTHER" id="PTHR43806:SF11">
    <property type="entry name" value="CEREVISIN-RELATED"/>
    <property type="match status" value="1"/>
</dbReference>
<dbReference type="PANTHER" id="PTHR43806">
    <property type="entry name" value="PEPTIDASE S8"/>
    <property type="match status" value="1"/>
</dbReference>
<dbReference type="Pfam" id="PF05922">
    <property type="entry name" value="Inhibitor_I9"/>
    <property type="match status" value="1"/>
</dbReference>
<dbReference type="Pfam" id="PF00082">
    <property type="entry name" value="Peptidase_S8"/>
    <property type="match status" value="1"/>
</dbReference>
<dbReference type="PRINTS" id="PR00723">
    <property type="entry name" value="SUBTILISIN"/>
</dbReference>
<dbReference type="SUPFAM" id="SSF54897">
    <property type="entry name" value="Protease propeptides/inhibitors"/>
    <property type="match status" value="1"/>
</dbReference>
<dbReference type="SUPFAM" id="SSF52743">
    <property type="entry name" value="Subtilisin-like"/>
    <property type="match status" value="1"/>
</dbReference>
<dbReference type="PROSITE" id="PS51892">
    <property type="entry name" value="SUBTILASE"/>
    <property type="match status" value="1"/>
</dbReference>
<dbReference type="PROSITE" id="PS00138">
    <property type="entry name" value="SUBTILASE_SER"/>
    <property type="match status" value="1"/>
</dbReference>
<accession>D4AWY5</accession>
<protein>
    <recommendedName>
        <fullName>Subtilisin-like protease 3</fullName>
        <ecNumber>3.4.21.-</ecNumber>
    </recommendedName>
</protein>
<feature type="signal peptide" evidence="2">
    <location>
        <begin position="1"/>
        <end position="19"/>
    </location>
</feature>
<feature type="propeptide" id="PRO_0000397786" evidence="1">
    <location>
        <begin position="20"/>
        <end position="116"/>
    </location>
</feature>
<feature type="chain" id="PRO_0000397787" description="Subtilisin-like protease 3">
    <location>
        <begin position="117"/>
        <end position="397"/>
    </location>
</feature>
<feature type="domain" description="Inhibitor I9" evidence="2">
    <location>
        <begin position="35"/>
        <end position="116"/>
    </location>
</feature>
<feature type="domain" description="Peptidase S8" evidence="3">
    <location>
        <begin position="126"/>
        <end position="397"/>
    </location>
</feature>
<feature type="active site" description="Charge relay system" evidence="3">
    <location>
        <position position="158"/>
    </location>
</feature>
<feature type="active site" description="Charge relay system" evidence="3">
    <location>
        <position position="189"/>
    </location>
</feature>
<feature type="active site" description="Charge relay system" evidence="3">
    <location>
        <position position="344"/>
    </location>
</feature>
<feature type="glycosylation site" description="N-linked (GlcNAc...) asparagine" evidence="2">
    <location>
        <position position="250"/>
    </location>
</feature>
<feature type="glycosylation site" description="N-linked (GlcNAc...) asparagine" evidence="2">
    <location>
        <position position="393"/>
    </location>
</feature>
<reference key="1">
    <citation type="journal article" date="2011" name="Genome Biol.">
        <title>Comparative and functional genomics provide insights into the pathogenicity of dermatophytic fungi.</title>
        <authorList>
            <person name="Burmester A."/>
            <person name="Shelest E."/>
            <person name="Gloeckner G."/>
            <person name="Heddergott C."/>
            <person name="Schindler S."/>
            <person name="Staib P."/>
            <person name="Heidel A."/>
            <person name="Felder M."/>
            <person name="Petzold A."/>
            <person name="Szafranski K."/>
            <person name="Feuermann M."/>
            <person name="Pedruzzi I."/>
            <person name="Priebe S."/>
            <person name="Groth M."/>
            <person name="Winkler R."/>
            <person name="Li W."/>
            <person name="Kniemeyer O."/>
            <person name="Schroeckh V."/>
            <person name="Hertweck C."/>
            <person name="Hube B."/>
            <person name="White T.C."/>
            <person name="Platzer M."/>
            <person name="Guthke R."/>
            <person name="Heitman J."/>
            <person name="Woestemeyer J."/>
            <person name="Zipfel P.F."/>
            <person name="Monod M."/>
            <person name="Brakhage A.A."/>
        </authorList>
    </citation>
    <scope>NUCLEOTIDE SEQUENCE [LARGE SCALE GENOMIC DNA]</scope>
    <scope>IDENTIFICATION BY MASS SPECTROMETRY</scope>
    <scope>SUBCELLULAR LOCATION</scope>
    <source>
        <strain>ATCC MYA-4681 / CBS 112371</strain>
    </source>
</reference>
<reference key="2">
    <citation type="journal article" date="2010" name="Microbiology">
        <title>Differential gene expression in the pathogenic dermatophyte Arthroderma benhamiae in vitro versus during infection.</title>
        <authorList>
            <person name="Staib P."/>
            <person name="Zaugg C."/>
            <person name="Mignon B."/>
            <person name="Weber J."/>
            <person name="Grumbt M."/>
            <person name="Pradervand S."/>
            <person name="Harshman K."/>
            <person name="Monod M."/>
        </authorList>
    </citation>
    <scope>INDUCTION</scope>
</reference>
<name>SUB3_ARTBC</name>
<proteinExistence type="evidence at protein level"/>
<gene>
    <name type="primary">SUB3</name>
    <name type="ORF">ARB_00701</name>
</gene>
<organism>
    <name type="scientific">Arthroderma benhamiae (strain ATCC MYA-4681 / CBS 112371)</name>
    <name type="common">Trichophyton mentagrophytes</name>
    <dbReference type="NCBI Taxonomy" id="663331"/>
    <lineage>
        <taxon>Eukaryota</taxon>
        <taxon>Fungi</taxon>
        <taxon>Dikarya</taxon>
        <taxon>Ascomycota</taxon>
        <taxon>Pezizomycotina</taxon>
        <taxon>Eurotiomycetes</taxon>
        <taxon>Eurotiomycetidae</taxon>
        <taxon>Onygenales</taxon>
        <taxon>Arthrodermataceae</taxon>
        <taxon>Trichophyton</taxon>
    </lineage>
</organism>
<comment type="function">
    <text evidence="1">Secreted subtilisin-like serine protease with keratinolytic activity that contributes to pathogenicity.</text>
</comment>
<comment type="subcellular location">
    <subcellularLocation>
        <location evidence="5">Secreted</location>
    </subcellularLocation>
</comment>
<comment type="induction">
    <text evidence="4">Expression is up-regulated during infection.</text>
</comment>
<comment type="similarity">
    <text evidence="6">Belongs to the peptidase S8 family.</text>
</comment>
<keyword id="KW-0325">Glycoprotein</keyword>
<keyword id="KW-0378">Hydrolase</keyword>
<keyword id="KW-0645">Protease</keyword>
<keyword id="KW-1185">Reference proteome</keyword>
<keyword id="KW-0964">Secreted</keyword>
<keyword id="KW-0720">Serine protease</keyword>
<keyword id="KW-0732">Signal</keyword>
<keyword id="KW-0843">Virulence</keyword>
<keyword id="KW-0865">Zymogen</keyword>
<sequence length="397" mass="41015">MGCIKVISVFLAAIAAVDARAFFHNRGGNDVIPNSYIVVMKDGVTAEDFDSHISSVAATHSLNKAKRGSETVGHKDSFNINGWRAYNGHFDEATIESILKDDKVNYVEHDRVVKLAALTTQPNAPTWGLGRVSHKAPGNKDFVYDSSAGQGITIYGVDTGIDIRHPEFAGRIRWGTNTVDNDNTDGNGHGTHTAGTFAGTTYGVAKKANIVAVKVLSAGGSGSTSGVIKGIDWCVTDARSKNALGKAALNLSLGGSFSQASNDAVTRAQEAGIFVAVAAGNDNRDAKNSSPASAPAVCTAASSTIDDQKSSFSNWGTIVDIYAPGSNILSAAPGGGTRTLSGTSMASPHVCGVGAAMLAQGVSVAQACDRLKQIGNAVIRNPGTGTTNRLLYNGSGR</sequence>
<evidence type="ECO:0000250" key="1"/>
<evidence type="ECO:0000255" key="2"/>
<evidence type="ECO:0000255" key="3">
    <source>
        <dbReference type="PROSITE-ProRule" id="PRU01240"/>
    </source>
</evidence>
<evidence type="ECO:0000269" key="4">
    <source>
    </source>
</evidence>
<evidence type="ECO:0000269" key="5">
    <source>
    </source>
</evidence>
<evidence type="ECO:0000305" key="6"/>